<evidence type="ECO:0000255" key="1">
    <source>
        <dbReference type="HAMAP-Rule" id="MF_04072"/>
    </source>
</evidence>
<evidence type="ECO:0000305" key="2"/>
<comment type="function">
    <text>Binds to sialic acid-containing receptors on the cell surface, bringing about the attachment of the virus particle to the cell. This attachment induces virion internalization of about two third of the virus particles through clathrin-dependent endocytosis and about one third through a clathrin- and caveolin-independent pathway. Plays a major role in the determination of host range restriction and virulence. Class I viral fusion protein. Responsible for penetration of the virus into the cell cytoplasm by mediating the fusion of the membrane of the endocytosed virus particle with the endosomal membrane. Low pH in endosomes induces an irreversible conformational change in HA2, releasing the fusion hydrophobic peptide. Several trimers are required to form a competent fusion pore.</text>
</comment>
<comment type="function">
    <text evidence="1">Binds to sialic acid-containing receptors on the cell surface, bringing about the attachment of the virus particle to the cell. This attachment induces virion internalization either through clathrin-dependent endocytosis or through clathrin- and caveolin-independent pathway. Plays a major role in the determination of host range restriction and virulence. Class I viral fusion protein. Responsible for penetration of the virus into the cell cytoplasm by mediating the fusion of the membrane of the endocytosed virus particle with the endosomal membrane. Low pH in endosomes induces an irreversible conformational change in HA2, releasing the fusion hydrophobic peptide. Several trimers are required to form a competent fusion pore.</text>
</comment>
<comment type="subunit">
    <text evidence="1">Homotrimer of disulfide-linked HA1-HA2.</text>
</comment>
<comment type="subcellular location">
    <subcellularLocation>
        <location evidence="1">Virion membrane</location>
        <topology evidence="1">Single-pass type I membrane protein</topology>
    </subcellularLocation>
    <subcellularLocation>
        <location evidence="1">Host apical cell membrane</location>
        <topology evidence="1">Single-pass type I membrane protein</topology>
    </subcellularLocation>
    <text evidence="1">Targeted to the apical plasma membrane in epithelial polarized cells through a signal present in the transmembrane domain. Associated with glycosphingolipid- and cholesterol-enriched detergent-resistant lipid rafts.</text>
</comment>
<comment type="PTM">
    <text evidence="1">Palmitoylated.</text>
</comment>
<comment type="PTM">
    <text evidence="1">In natural infection, inactive HA is matured into HA1 and HA2 outside the cell by one or more trypsin-like, arginine-specific endoprotease secreted by the bronchial epithelial cells. One identified protease that may be involved in this process is secreted in lungs by club cells.</text>
</comment>
<comment type="miscellaneous">
    <text>Major glycoprotein, comprises over 80% of the envelope proteins present in virus particle.</text>
</comment>
<comment type="miscellaneous">
    <text>The extent of infection into host organism is determined by HA. Influenza viruses bud from the apical surface of polarized epithelial cells (e.g. bronchial epithelial cells) into lumen of lungs and are therefore usually pneumotropic. The reason is that HA is cleaved by tryptase clara which is restricted to lungs. However, HAs of H5 and H7 pantropic avian viruses subtypes can be cleaved by furin and subtilisin-type enzymes, allowing the virus to grow in other organs than lungs.</text>
</comment>
<comment type="miscellaneous">
    <text evidence="2">The influenza A genome consist of 8 RNA segments. Genetic variation of hemagglutinin and/or neuraminidase genes results in the emergence of new influenza strains. The mechanism of variation can be the result of point mutations or the result of genetic reassortment between segments of two different strains.</text>
</comment>
<comment type="similarity">
    <text evidence="1">Belongs to the influenza viruses hemagglutinin family.</text>
</comment>
<dbReference type="EMBL" id="X62557">
    <property type="protein sequence ID" value="CAA44434.1"/>
    <property type="molecule type" value="Genomic_RNA"/>
</dbReference>
<dbReference type="PIR" id="S22020">
    <property type="entry name" value="S22020"/>
</dbReference>
<dbReference type="SMR" id="P26103"/>
<dbReference type="GlyCosmos" id="P26103">
    <property type="glycosylation" value="6 sites, No reported glycans"/>
</dbReference>
<dbReference type="GO" id="GO:0020002">
    <property type="term" value="C:host cell plasma membrane"/>
    <property type="evidence" value="ECO:0007669"/>
    <property type="project" value="UniProtKB-SubCell"/>
</dbReference>
<dbReference type="GO" id="GO:0016020">
    <property type="term" value="C:membrane"/>
    <property type="evidence" value="ECO:0007669"/>
    <property type="project" value="UniProtKB-UniRule"/>
</dbReference>
<dbReference type="GO" id="GO:0019031">
    <property type="term" value="C:viral envelope"/>
    <property type="evidence" value="ECO:0007669"/>
    <property type="project" value="UniProtKB-UniRule"/>
</dbReference>
<dbReference type="GO" id="GO:0055036">
    <property type="term" value="C:virion membrane"/>
    <property type="evidence" value="ECO:0007669"/>
    <property type="project" value="UniProtKB-SubCell"/>
</dbReference>
<dbReference type="GO" id="GO:0046789">
    <property type="term" value="F:host cell surface receptor binding"/>
    <property type="evidence" value="ECO:0007669"/>
    <property type="project" value="UniProtKB-UniRule"/>
</dbReference>
<dbReference type="GO" id="GO:0075512">
    <property type="term" value="P:clathrin-dependent endocytosis of virus by host cell"/>
    <property type="evidence" value="ECO:0007669"/>
    <property type="project" value="UniProtKB-UniRule"/>
</dbReference>
<dbReference type="GO" id="GO:0039654">
    <property type="term" value="P:fusion of virus membrane with host endosome membrane"/>
    <property type="evidence" value="ECO:0007669"/>
    <property type="project" value="UniProtKB-UniRule"/>
</dbReference>
<dbReference type="GO" id="GO:0019064">
    <property type="term" value="P:fusion of virus membrane with host plasma membrane"/>
    <property type="evidence" value="ECO:0007669"/>
    <property type="project" value="InterPro"/>
</dbReference>
<dbReference type="GO" id="GO:0046761">
    <property type="term" value="P:viral budding from plasma membrane"/>
    <property type="evidence" value="ECO:0007669"/>
    <property type="project" value="UniProtKB-UniRule"/>
</dbReference>
<dbReference type="GO" id="GO:0019062">
    <property type="term" value="P:virion attachment to host cell"/>
    <property type="evidence" value="ECO:0007669"/>
    <property type="project" value="UniProtKB-KW"/>
</dbReference>
<dbReference type="Gene3D" id="3.90.20.10">
    <property type="match status" value="1"/>
</dbReference>
<dbReference type="Gene3D" id="3.90.209.20">
    <property type="match status" value="1"/>
</dbReference>
<dbReference type="HAMAP" id="MF_04072">
    <property type="entry name" value="INFV_HEMA"/>
    <property type="match status" value="1"/>
</dbReference>
<dbReference type="InterPro" id="IPR008980">
    <property type="entry name" value="Capsid_hemagglutn"/>
</dbReference>
<dbReference type="InterPro" id="IPR013828">
    <property type="entry name" value="Hemagglutn_HA1_a/b_dom_sf"/>
</dbReference>
<dbReference type="InterPro" id="IPR000149">
    <property type="entry name" value="Hemagglutn_influenz_A"/>
</dbReference>
<dbReference type="InterPro" id="IPR001364">
    <property type="entry name" value="Hemagglutn_influenz_A/B"/>
</dbReference>
<dbReference type="Pfam" id="PF00509">
    <property type="entry name" value="Hemagglutinin"/>
    <property type="match status" value="1"/>
</dbReference>
<dbReference type="PRINTS" id="PR00330">
    <property type="entry name" value="HEMAGGLUTN1"/>
</dbReference>
<dbReference type="PRINTS" id="PR00329">
    <property type="entry name" value="HEMAGGLUTN12"/>
</dbReference>
<dbReference type="SUPFAM" id="SSF58064">
    <property type="entry name" value="Influenza hemagglutinin (stalk)"/>
    <property type="match status" value="1"/>
</dbReference>
<dbReference type="SUPFAM" id="SSF49818">
    <property type="entry name" value="Viral protein domain"/>
    <property type="match status" value="1"/>
</dbReference>
<feature type="signal peptide" evidence="1">
    <location>
        <begin position="1"/>
        <end position="18"/>
    </location>
</feature>
<feature type="chain" id="PRO_0000440433" description="Hemagglutinin" evidence="1">
    <location>
        <begin position="19"/>
        <end position="570"/>
    </location>
</feature>
<feature type="chain" id="PRO_0000039002" description="Hemagglutinin HA1 chain" evidence="1">
    <location>
        <begin position="19"/>
        <end position="348"/>
    </location>
</feature>
<feature type="chain" id="PRO_0000039003" description="Hemagglutinin HA2 chain" evidence="1">
    <location>
        <begin position="350"/>
        <end position="570"/>
    </location>
</feature>
<feature type="topological domain" description="Extracellular" evidence="1">
    <location>
        <begin position="19"/>
        <end position="533"/>
    </location>
</feature>
<feature type="transmembrane region" description="Helical" evidence="1">
    <location>
        <begin position="534"/>
        <end position="554"/>
    </location>
</feature>
<feature type="topological domain" description="Cytoplasmic" evidence="1">
    <location>
        <begin position="555"/>
        <end position="570"/>
    </location>
</feature>
<feature type="site" description="Cleavage; by host" evidence="1">
    <location>
        <begin position="349"/>
        <end position="350"/>
    </location>
</feature>
<feature type="lipid moiety-binding region" description="S-palmitoyl cysteine; by host" evidence="1">
    <location>
        <position position="566"/>
    </location>
</feature>
<feature type="lipid moiety-binding region" description="S-palmitoyl cysteine; by host" evidence="1">
    <location>
        <position position="569"/>
    </location>
</feature>
<feature type="glycosylation site" description="N-linked (GlcNAc...) asparagine; by host" evidence="1">
    <location>
        <position position="30"/>
    </location>
</feature>
<feature type="glycosylation site" description="N-linked (GlcNAc...) asparagine; by host" evidence="1">
    <location>
        <position position="46"/>
    </location>
</feature>
<feature type="glycosylation site" description="N-linked (GlcNAc...) asparagine; by host" evidence="1">
    <location>
        <position position="249"/>
    </location>
</feature>
<feature type="glycosylation site" description="N-linked (GlcNAc...) asparagine; by host" evidence="1">
    <location>
        <position position="335"/>
    </location>
</feature>
<feature type="glycosylation site" description="N-linked (GlcNAc...) asparagine; by host" evidence="1">
    <location>
        <position position="431"/>
    </location>
</feature>
<feature type="glycosylation site" description="N-linked (GlcNAc...) asparagine; by host" evidence="1">
    <location>
        <position position="503"/>
    </location>
</feature>
<feature type="disulfide bond" description="Interchain (between HA1 and HA2 chains)" evidence="1">
    <location>
        <begin position="22"/>
        <end position="486"/>
    </location>
</feature>
<feature type="disulfide bond" evidence="1">
    <location>
        <begin position="60"/>
        <end position="286"/>
    </location>
</feature>
<feature type="disulfide bond" evidence="1">
    <location>
        <begin position="72"/>
        <end position="84"/>
    </location>
</feature>
<feature type="disulfide bond" evidence="1">
    <location>
        <begin position="105"/>
        <end position="147"/>
    </location>
</feature>
<feature type="disulfide bond" evidence="1">
    <location>
        <begin position="290"/>
        <end position="314"/>
    </location>
</feature>
<feature type="disulfide bond" evidence="1">
    <location>
        <begin position="493"/>
        <end position="497"/>
    </location>
</feature>
<name>HEMA_I72A7</name>
<organismHost>
    <name type="scientific">Aves</name>
    <dbReference type="NCBI Taxonomy" id="8782"/>
</organismHost>
<organismHost>
    <name type="scientific">Equus caballus</name>
    <name type="common">Horse</name>
    <dbReference type="NCBI Taxonomy" id="9796"/>
</organismHost>
<organismHost>
    <name type="scientific">Homo sapiens</name>
    <name type="common">Human</name>
    <dbReference type="NCBI Taxonomy" id="9606"/>
</organismHost>
<organismHost>
    <name type="scientific">Phocidae</name>
    <name type="common">true seals</name>
    <dbReference type="NCBI Taxonomy" id="9709"/>
</organismHost>
<sequence>MNTQILILAISAFLCVRADKICLGHHAVSNGTKVDTLTEKGIEVVNATETVEQKNIPKICSKGKQTIDLGQCGLLGTTIGPPQCDQFLEFSANLIIERREGDDICYPGKFDNEETLRQILRKSGGIKKENMGFTYTGVRTNGETSACRRSRSSFYAEMKWLLSNTDNGVFPQMTKSYKNTKREPALIIWGIHHSGSTAEQTKLYGSGDKLITVWSSKYQQSFAPNPGPRPQINGQSGRIDFYWLMLDPNDTVTFSFNGAFIAPDRASFLRGKSLGIKSDAQLDNNCEGECYHIGGTIISNLPFQNINSRAIGKCPRYVKQKSLMLATGMKNVPENSTHKQLTHHMRKKRGLFGAIAGFIENGWEGLIDGWYGYRHQNAQGEGTAADYKSTQSAINQITGKLNRLIEKTNQQFELIDNEFNEIEKQIGNVINWTRDSIIEVWSYNAEFLVAVENQHTIDLTDSEMNKLYEKVRRQLRENAEEDGNGCFEIFHQCDNDCMASIRNNTYDHKKYRKEAIQNRIQIDAVKLSSGYKDIILWFSFGASCFLFLAIAMVLAFICIKNGNMRCTICI</sequence>
<protein>
    <recommendedName>
        <fullName evidence="1">Hemagglutinin</fullName>
    </recommendedName>
    <component>
        <recommendedName>
            <fullName evidence="1">Hemagglutinin HA1 chain</fullName>
        </recommendedName>
    </component>
    <component>
        <recommendedName>
            <fullName evidence="1">Hemagglutinin HA2 chain</fullName>
        </recommendedName>
    </component>
</protein>
<organism>
    <name type="scientific">Influenza A virus (strain A/Equine/Switzerland/137/1972 H7N7)</name>
    <dbReference type="NCBI Taxonomy" id="217829"/>
    <lineage>
        <taxon>Viruses</taxon>
        <taxon>Riboviria</taxon>
        <taxon>Orthornavirae</taxon>
        <taxon>Negarnaviricota</taxon>
        <taxon>Polyploviricotina</taxon>
        <taxon>Insthoviricetes</taxon>
        <taxon>Articulavirales</taxon>
        <taxon>Orthomyxoviridae</taxon>
        <taxon>Alphainfluenzavirus</taxon>
        <taxon>Alphainfluenzavirus influenzae</taxon>
        <taxon>Influenza A virus</taxon>
    </lineage>
</organism>
<gene>
    <name evidence="1" type="primary">HA</name>
</gene>
<proteinExistence type="inferred from homology"/>
<accession>P26103</accession>
<reference key="1">
    <citation type="journal article" date="1992" name="Virus Res.">
        <title>Sequence analysis of the equine H7 influenza virus haemagglutinin gene.</title>
        <authorList>
            <person name="Gibson C.A."/>
            <person name="Daniels R.S."/>
            <person name="Oxford J.S."/>
            <person name="McCauley J.W."/>
        </authorList>
    </citation>
    <scope>NUCLEOTIDE SEQUENCE [GENOMIC RNA]</scope>
</reference>
<keyword id="KW-1167">Clathrin- and caveolin-independent endocytosis of virus by host</keyword>
<keyword id="KW-1165">Clathrin-mediated endocytosis of virus by host</keyword>
<keyword id="KW-1015">Disulfide bond</keyword>
<keyword id="KW-1170">Fusion of virus membrane with host endosomal membrane</keyword>
<keyword id="KW-1168">Fusion of virus membrane with host membrane</keyword>
<keyword id="KW-0325">Glycoprotein</keyword>
<keyword id="KW-0348">Hemagglutinin</keyword>
<keyword id="KW-1032">Host cell membrane</keyword>
<keyword id="KW-1043">Host membrane</keyword>
<keyword id="KW-0945">Host-virus interaction</keyword>
<keyword id="KW-0449">Lipoprotein</keyword>
<keyword id="KW-0472">Membrane</keyword>
<keyword id="KW-0564">Palmitate</keyword>
<keyword id="KW-0732">Signal</keyword>
<keyword id="KW-0812">Transmembrane</keyword>
<keyword id="KW-1133">Transmembrane helix</keyword>
<keyword id="KW-1161">Viral attachment to host cell</keyword>
<keyword id="KW-0261">Viral envelope protein</keyword>
<keyword id="KW-1162">Viral penetration into host cytoplasm</keyword>
<keyword id="KW-0946">Virion</keyword>
<keyword id="KW-1164">Virus endocytosis by host</keyword>
<keyword id="KW-1160">Virus entry into host cell</keyword>